<evidence type="ECO:0000255" key="1">
    <source>
        <dbReference type="HAMAP-Rule" id="MF_00815"/>
    </source>
</evidence>
<dbReference type="EMBL" id="CP000283">
    <property type="protein sequence ID" value="ABE37796.1"/>
    <property type="molecule type" value="Genomic_DNA"/>
</dbReference>
<dbReference type="SMR" id="Q13DP3"/>
<dbReference type="STRING" id="316057.RPD_0558"/>
<dbReference type="KEGG" id="rpd:RPD_0558"/>
<dbReference type="eggNOG" id="COG0224">
    <property type="taxonomic scope" value="Bacteria"/>
</dbReference>
<dbReference type="HOGENOM" id="CLU_050669_0_1_5"/>
<dbReference type="BioCyc" id="RPAL316057:RPD_RS02865-MONOMER"/>
<dbReference type="Proteomes" id="UP000001818">
    <property type="component" value="Chromosome"/>
</dbReference>
<dbReference type="GO" id="GO:0005886">
    <property type="term" value="C:plasma membrane"/>
    <property type="evidence" value="ECO:0007669"/>
    <property type="project" value="UniProtKB-SubCell"/>
</dbReference>
<dbReference type="GO" id="GO:0045259">
    <property type="term" value="C:proton-transporting ATP synthase complex"/>
    <property type="evidence" value="ECO:0007669"/>
    <property type="project" value="UniProtKB-KW"/>
</dbReference>
<dbReference type="GO" id="GO:0005524">
    <property type="term" value="F:ATP binding"/>
    <property type="evidence" value="ECO:0007669"/>
    <property type="project" value="UniProtKB-UniRule"/>
</dbReference>
<dbReference type="GO" id="GO:0046933">
    <property type="term" value="F:proton-transporting ATP synthase activity, rotational mechanism"/>
    <property type="evidence" value="ECO:0007669"/>
    <property type="project" value="UniProtKB-UniRule"/>
</dbReference>
<dbReference type="GO" id="GO:0042777">
    <property type="term" value="P:proton motive force-driven plasma membrane ATP synthesis"/>
    <property type="evidence" value="ECO:0007669"/>
    <property type="project" value="UniProtKB-UniRule"/>
</dbReference>
<dbReference type="CDD" id="cd12151">
    <property type="entry name" value="F1-ATPase_gamma"/>
    <property type="match status" value="1"/>
</dbReference>
<dbReference type="FunFam" id="1.10.287.80:FF:000001">
    <property type="entry name" value="ATP synthase gamma chain"/>
    <property type="match status" value="1"/>
</dbReference>
<dbReference type="Gene3D" id="3.40.1380.10">
    <property type="match status" value="1"/>
</dbReference>
<dbReference type="Gene3D" id="1.10.287.80">
    <property type="entry name" value="ATP synthase, gamma subunit, helix hairpin domain"/>
    <property type="match status" value="1"/>
</dbReference>
<dbReference type="HAMAP" id="MF_00815">
    <property type="entry name" value="ATP_synth_gamma_bact"/>
    <property type="match status" value="1"/>
</dbReference>
<dbReference type="InterPro" id="IPR035968">
    <property type="entry name" value="ATP_synth_F1_ATPase_gsu"/>
</dbReference>
<dbReference type="InterPro" id="IPR000131">
    <property type="entry name" value="ATP_synth_F1_gsu"/>
</dbReference>
<dbReference type="InterPro" id="IPR023632">
    <property type="entry name" value="ATP_synth_F1_gsu_CS"/>
</dbReference>
<dbReference type="NCBIfam" id="TIGR01146">
    <property type="entry name" value="ATPsyn_F1gamma"/>
    <property type="match status" value="1"/>
</dbReference>
<dbReference type="NCBIfam" id="NF004146">
    <property type="entry name" value="PRK05621.1-4"/>
    <property type="match status" value="1"/>
</dbReference>
<dbReference type="PANTHER" id="PTHR11693">
    <property type="entry name" value="ATP SYNTHASE GAMMA CHAIN"/>
    <property type="match status" value="1"/>
</dbReference>
<dbReference type="PANTHER" id="PTHR11693:SF22">
    <property type="entry name" value="ATP SYNTHASE SUBUNIT GAMMA, MITOCHONDRIAL"/>
    <property type="match status" value="1"/>
</dbReference>
<dbReference type="Pfam" id="PF00231">
    <property type="entry name" value="ATP-synt"/>
    <property type="match status" value="1"/>
</dbReference>
<dbReference type="PIRSF" id="PIRSF039089">
    <property type="entry name" value="ATP_synthase_gamma"/>
    <property type="match status" value="1"/>
</dbReference>
<dbReference type="PRINTS" id="PR00126">
    <property type="entry name" value="ATPASEGAMMA"/>
</dbReference>
<dbReference type="SUPFAM" id="SSF52943">
    <property type="entry name" value="ATP synthase (F1-ATPase), gamma subunit"/>
    <property type="match status" value="1"/>
</dbReference>
<dbReference type="PROSITE" id="PS00153">
    <property type="entry name" value="ATPASE_GAMMA"/>
    <property type="match status" value="1"/>
</dbReference>
<comment type="function">
    <text evidence="1">Produces ATP from ADP in the presence of a proton gradient across the membrane. The gamma chain is believed to be important in regulating ATPase activity and the flow of protons through the CF(0) complex.</text>
</comment>
<comment type="subunit">
    <text evidence="1">F-type ATPases have 2 components, CF(1) - the catalytic core - and CF(0) - the membrane proton channel. CF(1) has five subunits: alpha(3), beta(3), gamma(1), delta(1), epsilon(1). CF(0) has three main subunits: a, b and c.</text>
</comment>
<comment type="subcellular location">
    <subcellularLocation>
        <location evidence="1">Cell inner membrane</location>
        <topology evidence="1">Peripheral membrane protein</topology>
    </subcellularLocation>
</comment>
<comment type="similarity">
    <text evidence="1">Belongs to the ATPase gamma chain family.</text>
</comment>
<feature type="chain" id="PRO_1000053307" description="ATP synthase gamma chain">
    <location>
        <begin position="1"/>
        <end position="291"/>
    </location>
</feature>
<proteinExistence type="inferred from homology"/>
<accession>Q13DP3</accession>
<keyword id="KW-0066">ATP synthesis</keyword>
<keyword id="KW-0997">Cell inner membrane</keyword>
<keyword id="KW-1003">Cell membrane</keyword>
<keyword id="KW-0139">CF(1)</keyword>
<keyword id="KW-0375">Hydrogen ion transport</keyword>
<keyword id="KW-0406">Ion transport</keyword>
<keyword id="KW-0472">Membrane</keyword>
<keyword id="KW-0813">Transport</keyword>
<name>ATPG_RHOPS</name>
<gene>
    <name evidence="1" type="primary">atpG</name>
    <name type="ordered locus">RPD_0558</name>
</gene>
<sequence>MASLKDMRVRIASTKATQKITKAMQMVAASKLRRAQMAAEAARPYAEKMDAVISNIAGAAAGSPGAPVLLAGTGKDQVHLLLVCTGERGLSGAFNSSIVRLARERAYALMNQGKTVKFFCVGRKGYEQLRRTFDKQIIENIELRSVRQLGFVNAEDIAQKVIARFNNGEFDVCTLFYSRFKSVISQIPTAQQLIPLVVEAPAAGSVATSYEYEPEEDEILSTLLPRNLAVQIFRALLENNASFYGAQMSAMDNATRNAGDMIRKQTLIYNRTRQAMITKELIEIISGAEAI</sequence>
<protein>
    <recommendedName>
        <fullName evidence="1">ATP synthase gamma chain</fullName>
    </recommendedName>
    <alternativeName>
        <fullName evidence="1">ATP synthase F1 sector gamma subunit</fullName>
    </alternativeName>
    <alternativeName>
        <fullName evidence="1">F-ATPase gamma subunit</fullName>
    </alternativeName>
</protein>
<organism>
    <name type="scientific">Rhodopseudomonas palustris (strain BisB5)</name>
    <dbReference type="NCBI Taxonomy" id="316057"/>
    <lineage>
        <taxon>Bacteria</taxon>
        <taxon>Pseudomonadati</taxon>
        <taxon>Pseudomonadota</taxon>
        <taxon>Alphaproteobacteria</taxon>
        <taxon>Hyphomicrobiales</taxon>
        <taxon>Nitrobacteraceae</taxon>
        <taxon>Rhodopseudomonas</taxon>
    </lineage>
</organism>
<reference key="1">
    <citation type="submission" date="2006-03" db="EMBL/GenBank/DDBJ databases">
        <title>Complete sequence of Rhodopseudomonas palustris BisB5.</title>
        <authorList>
            <consortium name="US DOE Joint Genome Institute"/>
            <person name="Copeland A."/>
            <person name="Lucas S."/>
            <person name="Lapidus A."/>
            <person name="Barry K."/>
            <person name="Detter J.C."/>
            <person name="Glavina del Rio T."/>
            <person name="Hammon N."/>
            <person name="Israni S."/>
            <person name="Dalin E."/>
            <person name="Tice H."/>
            <person name="Pitluck S."/>
            <person name="Chain P."/>
            <person name="Malfatti S."/>
            <person name="Shin M."/>
            <person name="Vergez L."/>
            <person name="Schmutz J."/>
            <person name="Larimer F."/>
            <person name="Land M."/>
            <person name="Hauser L."/>
            <person name="Pelletier D.A."/>
            <person name="Kyrpides N."/>
            <person name="Lykidis A."/>
            <person name="Oda Y."/>
            <person name="Harwood C.S."/>
            <person name="Richardson P."/>
        </authorList>
    </citation>
    <scope>NUCLEOTIDE SEQUENCE [LARGE SCALE GENOMIC DNA]</scope>
    <source>
        <strain>BisB5</strain>
    </source>
</reference>